<comment type="function">
    <text evidence="1">Catalyzes the reversible formation of acyl-phosphate (acyl-PO(4)) from acyl-[acyl-carrier-protein] (acyl-ACP). This enzyme utilizes acyl-ACP as fatty acyl donor, but not acyl-CoA.</text>
</comment>
<comment type="catalytic activity">
    <reaction evidence="1">
        <text>a fatty acyl-[ACP] + phosphate = an acyl phosphate + holo-[ACP]</text>
        <dbReference type="Rhea" id="RHEA:42292"/>
        <dbReference type="Rhea" id="RHEA-COMP:9685"/>
        <dbReference type="Rhea" id="RHEA-COMP:14125"/>
        <dbReference type="ChEBI" id="CHEBI:43474"/>
        <dbReference type="ChEBI" id="CHEBI:59918"/>
        <dbReference type="ChEBI" id="CHEBI:64479"/>
        <dbReference type="ChEBI" id="CHEBI:138651"/>
        <dbReference type="EC" id="2.3.1.274"/>
    </reaction>
</comment>
<comment type="pathway">
    <text evidence="1">Lipid metabolism; phospholipid metabolism.</text>
</comment>
<comment type="subunit">
    <text evidence="1">Homodimer. Probably interacts with PlsY.</text>
</comment>
<comment type="subcellular location">
    <subcellularLocation>
        <location evidence="1">Cytoplasm</location>
    </subcellularLocation>
    <text evidence="1">Associated with the membrane possibly through PlsY.</text>
</comment>
<comment type="similarity">
    <text evidence="1">Belongs to the PlsX family.</text>
</comment>
<dbReference type="EC" id="2.3.1.274" evidence="1"/>
<dbReference type="EMBL" id="CP000113">
    <property type="protein sequence ID" value="ABF87405.1"/>
    <property type="molecule type" value="Genomic_DNA"/>
</dbReference>
<dbReference type="RefSeq" id="WP_011554759.1">
    <property type="nucleotide sequence ID" value="NC_008095.1"/>
</dbReference>
<dbReference type="SMR" id="Q1D339"/>
<dbReference type="STRING" id="246197.MXAN_4772"/>
<dbReference type="EnsemblBacteria" id="ABF87405">
    <property type="protein sequence ID" value="ABF87405"/>
    <property type="gene ID" value="MXAN_4772"/>
</dbReference>
<dbReference type="GeneID" id="41362071"/>
<dbReference type="KEGG" id="mxa:MXAN_4772"/>
<dbReference type="eggNOG" id="COG0416">
    <property type="taxonomic scope" value="Bacteria"/>
</dbReference>
<dbReference type="HOGENOM" id="CLU_039379_1_1_7"/>
<dbReference type="OrthoDB" id="9806408at2"/>
<dbReference type="UniPathway" id="UPA00085"/>
<dbReference type="Proteomes" id="UP000002402">
    <property type="component" value="Chromosome"/>
</dbReference>
<dbReference type="GO" id="GO:0005737">
    <property type="term" value="C:cytoplasm"/>
    <property type="evidence" value="ECO:0007669"/>
    <property type="project" value="UniProtKB-SubCell"/>
</dbReference>
<dbReference type="GO" id="GO:0043811">
    <property type="term" value="F:phosphate:acyl-[acyl carrier protein] acyltransferase activity"/>
    <property type="evidence" value="ECO:0007669"/>
    <property type="project" value="UniProtKB-UniRule"/>
</dbReference>
<dbReference type="GO" id="GO:0006633">
    <property type="term" value="P:fatty acid biosynthetic process"/>
    <property type="evidence" value="ECO:0007669"/>
    <property type="project" value="UniProtKB-UniRule"/>
</dbReference>
<dbReference type="GO" id="GO:0008654">
    <property type="term" value="P:phospholipid biosynthetic process"/>
    <property type="evidence" value="ECO:0007669"/>
    <property type="project" value="UniProtKB-KW"/>
</dbReference>
<dbReference type="Gene3D" id="3.40.718.10">
    <property type="entry name" value="Isopropylmalate Dehydrogenase"/>
    <property type="match status" value="1"/>
</dbReference>
<dbReference type="HAMAP" id="MF_00019">
    <property type="entry name" value="PlsX"/>
    <property type="match status" value="1"/>
</dbReference>
<dbReference type="InterPro" id="IPR003664">
    <property type="entry name" value="FA_synthesis"/>
</dbReference>
<dbReference type="InterPro" id="IPR012281">
    <property type="entry name" value="Phospholipid_synth_PlsX-like"/>
</dbReference>
<dbReference type="NCBIfam" id="TIGR00182">
    <property type="entry name" value="plsX"/>
    <property type="match status" value="1"/>
</dbReference>
<dbReference type="PANTHER" id="PTHR30100">
    <property type="entry name" value="FATTY ACID/PHOSPHOLIPID SYNTHESIS PROTEIN PLSX"/>
    <property type="match status" value="1"/>
</dbReference>
<dbReference type="PANTHER" id="PTHR30100:SF1">
    <property type="entry name" value="PHOSPHATE ACYLTRANSFERASE"/>
    <property type="match status" value="1"/>
</dbReference>
<dbReference type="Pfam" id="PF02504">
    <property type="entry name" value="FA_synthesis"/>
    <property type="match status" value="1"/>
</dbReference>
<dbReference type="PIRSF" id="PIRSF002465">
    <property type="entry name" value="Phsphlp_syn_PlsX"/>
    <property type="match status" value="1"/>
</dbReference>
<dbReference type="SUPFAM" id="SSF53659">
    <property type="entry name" value="Isocitrate/Isopropylmalate dehydrogenase-like"/>
    <property type="match status" value="1"/>
</dbReference>
<organism>
    <name type="scientific">Myxococcus xanthus (strain DK1622)</name>
    <dbReference type="NCBI Taxonomy" id="246197"/>
    <lineage>
        <taxon>Bacteria</taxon>
        <taxon>Pseudomonadati</taxon>
        <taxon>Myxococcota</taxon>
        <taxon>Myxococcia</taxon>
        <taxon>Myxococcales</taxon>
        <taxon>Cystobacterineae</taxon>
        <taxon>Myxococcaceae</taxon>
        <taxon>Myxococcus</taxon>
    </lineage>
</organism>
<accession>Q1D339</accession>
<gene>
    <name evidence="1" type="primary">plsX</name>
    <name type="ordered locus">MXAN_4772</name>
</gene>
<proteinExistence type="inferred from homology"/>
<sequence length="353" mass="36631">MRLVLDAMGGDHAPAAPVEGGVLFARAHPGHEVLLVGDEAKVAPLLGKLRPPSNLQVHHASEVVEMDEHASTAFRRKRDSSLRVGFELVRDGRAEALVSAGNSGAVMAGGLLTLGRLPGVERPAIAALFPALKGGGRCLLLDAGANVDCKPTHLAQFAVMGEAYVRARMGVARPRVAVLSNGEESSKGTPLTREASGLLRRSDLDFVGYVEGKDLFSGEVQVVVTDGFTGNVVLKTSEGVGMGVIGMLRQAIERRGGLAEKVGAMLLQPALAGLRRVVDYAEYGGAPLLGIQGVGIVAHGRSTPRALFNALGAALAMAEGGVQAELTRCIGRAAAWLPTHPKGKRATDAGVSD</sequence>
<name>PLSX_MYXXD</name>
<feature type="chain" id="PRO_0000329241" description="Phosphate acyltransferase">
    <location>
        <begin position="1"/>
        <end position="353"/>
    </location>
</feature>
<evidence type="ECO:0000255" key="1">
    <source>
        <dbReference type="HAMAP-Rule" id="MF_00019"/>
    </source>
</evidence>
<keyword id="KW-0963">Cytoplasm</keyword>
<keyword id="KW-0444">Lipid biosynthesis</keyword>
<keyword id="KW-0443">Lipid metabolism</keyword>
<keyword id="KW-0594">Phospholipid biosynthesis</keyword>
<keyword id="KW-1208">Phospholipid metabolism</keyword>
<keyword id="KW-1185">Reference proteome</keyword>
<keyword id="KW-0808">Transferase</keyword>
<protein>
    <recommendedName>
        <fullName evidence="1">Phosphate acyltransferase</fullName>
        <ecNumber evidence="1">2.3.1.274</ecNumber>
    </recommendedName>
    <alternativeName>
        <fullName evidence="1">Acyl-ACP phosphotransacylase</fullName>
    </alternativeName>
    <alternativeName>
        <fullName evidence="1">Acyl-[acyl-carrier-protein]--phosphate acyltransferase</fullName>
    </alternativeName>
    <alternativeName>
        <fullName evidence="1">Phosphate-acyl-ACP acyltransferase</fullName>
    </alternativeName>
</protein>
<reference key="1">
    <citation type="journal article" date="2006" name="Proc. Natl. Acad. Sci. U.S.A.">
        <title>Evolution of sensory complexity recorded in a myxobacterial genome.</title>
        <authorList>
            <person name="Goldman B.S."/>
            <person name="Nierman W.C."/>
            <person name="Kaiser D."/>
            <person name="Slater S.C."/>
            <person name="Durkin A.S."/>
            <person name="Eisen J.A."/>
            <person name="Ronning C.M."/>
            <person name="Barbazuk W.B."/>
            <person name="Blanchard M."/>
            <person name="Field C."/>
            <person name="Halling C."/>
            <person name="Hinkle G."/>
            <person name="Iartchuk O."/>
            <person name="Kim H.S."/>
            <person name="Mackenzie C."/>
            <person name="Madupu R."/>
            <person name="Miller N."/>
            <person name="Shvartsbeyn A."/>
            <person name="Sullivan S.A."/>
            <person name="Vaudin M."/>
            <person name="Wiegand R."/>
            <person name="Kaplan H.B."/>
        </authorList>
    </citation>
    <scope>NUCLEOTIDE SEQUENCE [LARGE SCALE GENOMIC DNA]</scope>
    <source>
        <strain>DK1622</strain>
    </source>
</reference>